<sequence>MHTVATSGPNASWGAPANASGCPGCGANASDGPVPSPRAVDAWLVPLFFAALMLLGLVGNSLVIYVICRHKPMRTVTNFYIANLAATDVTFLLCCVPFTALLYPLPGWVLGDFMCKFVNYIQQVSVQATCATLTAMSVDRWYVTVFPLRALHRRTPRLALAVSLSIWVGSAAVSAPVLALHRLSPGPRAYCSEAFPSRALERAFALYNLLALYLLPLLATCACYAAMLRHLGRVAVRPAPADSALQGQVLAERAGAVRAKVSRLVAAVVLLFAACWGPIQLFLVLQALGPAGSWHPRSYAAYALKTWAHCMSYSNSALNPLLYAFLGSHFRQAFRRVCPCAPRRPRRPRRPGPSDPAAPHAELLRLGSHPAPARAQKPGSSGLAARGLCVLGEDNAPL</sequence>
<keyword id="KW-0002">3D-structure</keyword>
<keyword id="KW-1003">Cell membrane</keyword>
<keyword id="KW-0225">Disease variant</keyword>
<keyword id="KW-1015">Disulfide bond</keyword>
<keyword id="KW-0297">G-protein coupled receptor</keyword>
<keyword id="KW-0325">Glycoprotein</keyword>
<keyword id="KW-1016">Hypogonadotropic hypogonadism</keyword>
<keyword id="KW-0472">Membrane</keyword>
<keyword id="KW-0675">Receptor</keyword>
<keyword id="KW-1185">Reference proteome</keyword>
<keyword id="KW-0807">Transducer</keyword>
<keyword id="KW-0812">Transmembrane</keyword>
<keyword id="KW-1133">Transmembrane helix</keyword>
<dbReference type="EMBL" id="AB051065">
    <property type="protein sequence ID" value="BAB55446.1"/>
    <property type="molecule type" value="mRNA"/>
</dbReference>
<dbReference type="EMBL" id="AF343725">
    <property type="protein sequence ID" value="AAK83235.1"/>
    <property type="molecule type" value="mRNA"/>
</dbReference>
<dbReference type="EMBL" id="AJ309020">
    <property type="protein sequence ID" value="CAC40817.1"/>
    <property type="molecule type" value="mRNA"/>
</dbReference>
<dbReference type="EMBL" id="AY029541">
    <property type="protein sequence ID" value="AAK33126.1"/>
    <property type="molecule type" value="mRNA"/>
</dbReference>
<dbReference type="EMBL" id="AY253981">
    <property type="protein sequence ID" value="AAP82929.1"/>
    <property type="molecule type" value="mRNA"/>
</dbReference>
<dbReference type="EMBL" id="AY253982">
    <property type="protein sequence ID" value="AAP82930.1"/>
    <property type="molecule type" value="mRNA"/>
</dbReference>
<dbReference type="EMBL" id="EU883577">
    <property type="protein sequence ID" value="ACG60651.1"/>
    <property type="molecule type" value="mRNA"/>
</dbReference>
<dbReference type="EMBL" id="AC005379">
    <property type="status" value="NOT_ANNOTATED_CDS"/>
    <property type="molecule type" value="Genomic_DNA"/>
</dbReference>
<dbReference type="EMBL" id="CH471139">
    <property type="protein sequence ID" value="EAW69583.1"/>
    <property type="molecule type" value="Genomic_DNA"/>
</dbReference>
<dbReference type="EMBL" id="BC140825">
    <property type="protein sequence ID" value="AAI40826.1"/>
    <property type="molecule type" value="mRNA"/>
</dbReference>
<dbReference type="EMBL" id="BC141812">
    <property type="protein sequence ID" value="AAI41813.1"/>
    <property type="molecule type" value="mRNA"/>
</dbReference>
<dbReference type="CCDS" id="CCDS12049.1"/>
<dbReference type="RefSeq" id="NP_115940.2">
    <property type="nucleotide sequence ID" value="NM_032551.5"/>
</dbReference>
<dbReference type="PDB" id="7YQE">
    <property type="method" value="X-ray"/>
    <property type="resolution" value="3.50 A"/>
    <property type="chains" value="A/B=333-357"/>
</dbReference>
<dbReference type="PDB" id="8XGO">
    <property type="method" value="EM"/>
    <property type="resolution" value="2.68 A"/>
    <property type="chains" value="A=1-398"/>
</dbReference>
<dbReference type="PDB" id="8XGS">
    <property type="method" value="EM"/>
    <property type="resolution" value="2.95 A"/>
    <property type="chains" value="A=1-398"/>
</dbReference>
<dbReference type="PDB" id="8XGU">
    <property type="method" value="EM"/>
    <property type="resolution" value="3.00 A"/>
    <property type="chains" value="A=1-398"/>
</dbReference>
<dbReference type="PDB" id="8ZJD">
    <property type="method" value="EM"/>
    <property type="resolution" value="3.06 A"/>
    <property type="chains" value="R=2-355"/>
</dbReference>
<dbReference type="PDB" id="8ZJE">
    <property type="method" value="EM"/>
    <property type="resolution" value="3.07 A"/>
    <property type="chains" value="R=1-398"/>
</dbReference>
<dbReference type="PDBsum" id="7YQE"/>
<dbReference type="PDBsum" id="8XGO"/>
<dbReference type="PDBsum" id="8XGS"/>
<dbReference type="PDBsum" id="8XGU"/>
<dbReference type="PDBsum" id="8ZJD"/>
<dbReference type="PDBsum" id="8ZJE"/>
<dbReference type="EMDB" id="EMD-38329"/>
<dbReference type="EMDB" id="EMD-38331"/>
<dbReference type="EMDB" id="EMD-38332"/>
<dbReference type="EMDB" id="EMD-60141"/>
<dbReference type="EMDB" id="EMD-60142"/>
<dbReference type="SMR" id="Q969F8"/>
<dbReference type="BioGRID" id="124162">
    <property type="interactions" value="4"/>
</dbReference>
<dbReference type="CORUM" id="Q969F8"/>
<dbReference type="FunCoup" id="Q969F8">
    <property type="interactions" value="620"/>
</dbReference>
<dbReference type="IntAct" id="Q969F8">
    <property type="interactions" value="20"/>
</dbReference>
<dbReference type="MINT" id="Q969F8"/>
<dbReference type="STRING" id="9606.ENSP00000234371"/>
<dbReference type="BindingDB" id="Q969F8"/>
<dbReference type="ChEMBL" id="CHEMBL5413"/>
<dbReference type="DrugBank" id="DB05967">
    <property type="generic name" value="ANZ-100"/>
</dbReference>
<dbReference type="DrugBank" id="DB16210">
    <property type="generic name" value="Kisspeptin-10"/>
</dbReference>
<dbReference type="DrugCentral" id="Q969F8"/>
<dbReference type="GuidetoPHARMACOLOGY" id="266"/>
<dbReference type="TCDB" id="9.A.14.13.14">
    <property type="family name" value="the g-protein-coupled receptor (gpcr) family"/>
</dbReference>
<dbReference type="GlyCosmos" id="Q969F8">
    <property type="glycosylation" value="3 sites, No reported glycans"/>
</dbReference>
<dbReference type="GlyGen" id="Q969F8">
    <property type="glycosylation" value="3 sites"/>
</dbReference>
<dbReference type="iPTMnet" id="Q969F8"/>
<dbReference type="PhosphoSitePlus" id="Q969F8"/>
<dbReference type="BioMuta" id="KISS1R"/>
<dbReference type="DMDM" id="125987836"/>
<dbReference type="MassIVE" id="Q969F8"/>
<dbReference type="PaxDb" id="9606-ENSP00000234371"/>
<dbReference type="PeptideAtlas" id="Q969F8"/>
<dbReference type="ProteomicsDB" id="75750"/>
<dbReference type="Antibodypedia" id="10260">
    <property type="antibodies" value="333 antibodies from 34 providers"/>
</dbReference>
<dbReference type="DNASU" id="84634"/>
<dbReference type="Ensembl" id="ENST00000234371.10">
    <property type="protein sequence ID" value="ENSP00000234371.3"/>
    <property type="gene ID" value="ENSG00000116014.10"/>
</dbReference>
<dbReference type="GeneID" id="84634"/>
<dbReference type="KEGG" id="hsa:84634"/>
<dbReference type="MANE-Select" id="ENST00000234371.10">
    <property type="protein sequence ID" value="ENSP00000234371.3"/>
    <property type="RefSeq nucleotide sequence ID" value="NM_032551.5"/>
    <property type="RefSeq protein sequence ID" value="NP_115940.2"/>
</dbReference>
<dbReference type="UCSC" id="uc002lqk.4">
    <property type="organism name" value="human"/>
</dbReference>
<dbReference type="AGR" id="HGNC:4510"/>
<dbReference type="CTD" id="84634"/>
<dbReference type="DisGeNET" id="84634"/>
<dbReference type="GeneCards" id="KISS1R"/>
<dbReference type="GeneReviews" id="KISS1R"/>
<dbReference type="HGNC" id="HGNC:4510">
    <property type="gene designation" value="KISS1R"/>
</dbReference>
<dbReference type="HPA" id="ENSG00000116014">
    <property type="expression patterns" value="Group enriched (brain, pancreas, pituitary gland)"/>
</dbReference>
<dbReference type="MalaCards" id="KISS1R"/>
<dbReference type="MIM" id="176400">
    <property type="type" value="phenotype"/>
</dbReference>
<dbReference type="MIM" id="604161">
    <property type="type" value="gene"/>
</dbReference>
<dbReference type="MIM" id="614837">
    <property type="type" value="phenotype"/>
</dbReference>
<dbReference type="neXtProt" id="NX_Q969F8"/>
<dbReference type="OpenTargets" id="ENSG00000116014"/>
<dbReference type="Orphanet" id="650077">
    <property type="disease" value="Genetic central precocious puberty in female"/>
</dbReference>
<dbReference type="Orphanet" id="650097">
    <property type="disease" value="Genetic central precocious puberty in male"/>
</dbReference>
<dbReference type="Orphanet" id="432">
    <property type="disease" value="Normosmic congenital hypogonadotropic hypogonadism"/>
</dbReference>
<dbReference type="PharmGKB" id="PA28899"/>
<dbReference type="VEuPathDB" id="HostDB:ENSG00000116014"/>
<dbReference type="eggNOG" id="KOG3656">
    <property type="taxonomic scope" value="Eukaryota"/>
</dbReference>
<dbReference type="GeneTree" id="ENSGT00940000157017"/>
<dbReference type="HOGENOM" id="CLU_009579_6_4_1"/>
<dbReference type="InParanoid" id="Q969F8"/>
<dbReference type="OMA" id="LYQMGHP"/>
<dbReference type="OrthoDB" id="2132067at2759"/>
<dbReference type="PAN-GO" id="Q969F8">
    <property type="GO annotations" value="3 GO annotations based on evolutionary models"/>
</dbReference>
<dbReference type="PhylomeDB" id="Q969F8"/>
<dbReference type="TreeFam" id="TF315737"/>
<dbReference type="PathwayCommons" id="Q969F8"/>
<dbReference type="Reactome" id="R-HSA-375276">
    <property type="pathway name" value="Peptide ligand-binding receptors"/>
</dbReference>
<dbReference type="Reactome" id="R-HSA-416476">
    <property type="pathway name" value="G alpha (q) signalling events"/>
</dbReference>
<dbReference type="SignaLink" id="Q969F8"/>
<dbReference type="SIGNOR" id="Q969F8"/>
<dbReference type="BioGRID-ORCS" id="84634">
    <property type="hits" value="17 hits in 1148 CRISPR screens"/>
</dbReference>
<dbReference type="GeneWiki" id="KiSS1-derived_peptide_receptor"/>
<dbReference type="GenomeRNAi" id="84634"/>
<dbReference type="Pharos" id="Q969F8">
    <property type="development level" value="Tchem"/>
</dbReference>
<dbReference type="PRO" id="PR:Q969F8"/>
<dbReference type="Proteomes" id="UP000005640">
    <property type="component" value="Chromosome 19"/>
</dbReference>
<dbReference type="RNAct" id="Q969F8">
    <property type="molecule type" value="protein"/>
</dbReference>
<dbReference type="Bgee" id="ENSG00000116014">
    <property type="expression patterns" value="Expressed in pons and 93 other cell types or tissues"/>
</dbReference>
<dbReference type="ExpressionAtlas" id="Q969F8">
    <property type="expression patterns" value="baseline and differential"/>
</dbReference>
<dbReference type="GO" id="GO:0009986">
    <property type="term" value="C:cell surface"/>
    <property type="evidence" value="ECO:0007669"/>
    <property type="project" value="Ensembl"/>
</dbReference>
<dbReference type="GO" id="GO:0005929">
    <property type="term" value="C:cilium"/>
    <property type="evidence" value="ECO:0000314"/>
    <property type="project" value="MGI"/>
</dbReference>
<dbReference type="GO" id="GO:0043231">
    <property type="term" value="C:intracellular membrane-bounded organelle"/>
    <property type="evidence" value="ECO:0000314"/>
    <property type="project" value="HPA"/>
</dbReference>
<dbReference type="GO" id="GO:0016020">
    <property type="term" value="C:membrane"/>
    <property type="evidence" value="ECO:0000314"/>
    <property type="project" value="UniProtKB"/>
</dbReference>
<dbReference type="GO" id="GO:0005886">
    <property type="term" value="C:plasma membrane"/>
    <property type="evidence" value="ECO:0000314"/>
    <property type="project" value="HPA"/>
</dbReference>
<dbReference type="GO" id="GO:0008528">
    <property type="term" value="F:G protein-coupled peptide receptor activity"/>
    <property type="evidence" value="ECO:0000318"/>
    <property type="project" value="GO_Central"/>
</dbReference>
<dbReference type="GO" id="GO:0008188">
    <property type="term" value="F:neuropeptide receptor activity"/>
    <property type="evidence" value="ECO:0000314"/>
    <property type="project" value="UniProtKB"/>
</dbReference>
<dbReference type="GO" id="GO:0007186">
    <property type="term" value="P:G protein-coupled receptor signaling pathway"/>
    <property type="evidence" value="ECO:0000303"/>
    <property type="project" value="UniProtKB"/>
</dbReference>
<dbReference type="GO" id="GO:0007218">
    <property type="term" value="P:neuropeptide signaling pathway"/>
    <property type="evidence" value="ECO:0000318"/>
    <property type="project" value="GO_Central"/>
</dbReference>
<dbReference type="CDD" id="cd15095">
    <property type="entry name" value="7tmA_KiSS1R"/>
    <property type="match status" value="1"/>
</dbReference>
<dbReference type="FunFam" id="1.20.1070.10:FF:000171">
    <property type="entry name" value="KISS1 receptor b"/>
    <property type="match status" value="1"/>
</dbReference>
<dbReference type="Gene3D" id="1.20.1070.10">
    <property type="entry name" value="Rhodopsin 7-helix transmembrane proteins"/>
    <property type="match status" value="1"/>
</dbReference>
<dbReference type="InterPro" id="IPR000276">
    <property type="entry name" value="GPCR_Rhodpsn"/>
</dbReference>
<dbReference type="InterPro" id="IPR017452">
    <property type="entry name" value="GPCR_Rhodpsn_7TM"/>
</dbReference>
<dbReference type="InterPro" id="IPR008103">
    <property type="entry name" value="KiSS_1_rcpt"/>
</dbReference>
<dbReference type="PANTHER" id="PTHR45695:SF23">
    <property type="entry name" value="GALANIN-LIKE G-PROTEIN COUPLED RECEPTOR NPR-9"/>
    <property type="match status" value="1"/>
</dbReference>
<dbReference type="PANTHER" id="PTHR45695">
    <property type="entry name" value="LEUCOKININ RECEPTOR-RELATED"/>
    <property type="match status" value="1"/>
</dbReference>
<dbReference type="Pfam" id="PF00001">
    <property type="entry name" value="7tm_1"/>
    <property type="match status" value="1"/>
</dbReference>
<dbReference type="PRINTS" id="PR00237">
    <property type="entry name" value="GPCRRHODOPSN"/>
</dbReference>
<dbReference type="PRINTS" id="PR01728">
    <property type="entry name" value="KISS1RECEPTR"/>
</dbReference>
<dbReference type="SUPFAM" id="SSF81321">
    <property type="entry name" value="Family A G protein-coupled receptor-like"/>
    <property type="match status" value="1"/>
</dbReference>
<dbReference type="PROSITE" id="PS50262">
    <property type="entry name" value="G_PROTEIN_RECEP_F1_2"/>
    <property type="match status" value="1"/>
</dbReference>
<name>KISSR_HUMAN</name>
<proteinExistence type="evidence at protein level"/>
<organism>
    <name type="scientific">Homo sapiens</name>
    <name type="common">Human</name>
    <dbReference type="NCBI Taxonomy" id="9606"/>
    <lineage>
        <taxon>Eukaryota</taxon>
        <taxon>Metazoa</taxon>
        <taxon>Chordata</taxon>
        <taxon>Craniata</taxon>
        <taxon>Vertebrata</taxon>
        <taxon>Euteleostomi</taxon>
        <taxon>Mammalia</taxon>
        <taxon>Eutheria</taxon>
        <taxon>Euarchontoglires</taxon>
        <taxon>Primates</taxon>
        <taxon>Haplorrhini</taxon>
        <taxon>Catarrhini</taxon>
        <taxon>Hominidae</taxon>
        <taxon>Homo</taxon>
    </lineage>
</organism>
<comment type="function">
    <text evidence="11">Receptor for metastin (kisspeptin-54 or kp-54), a C-terminally amidated peptide of KiSS1. KiSS1 is a metastasis suppressor protein that suppresses metastases in malignant melanomas and in some breast carcinomas without affecting tumorigenicity. The metastasis suppressor properties may be mediated in part by cell cycle arrest and induction of apoptosis in malignant cells. The receptor is essential for normal gonadotropin-released hormone physiology and for puberty. The hypothalamic KiSS1/KISS1R system is a pivotal factor in central regulation of the gonadotropic axis at puberty and in adulthood. The receptor is also probably involved in the regulation and fine-tuning of trophoblast invasion generated by the trophoblast itself. Analysis of the transduction pathways activated by the receptor identifies coupling to phospholipase C and intracellular calcium release through pertussis toxin-insensitive G(q) proteins.</text>
</comment>
<comment type="interaction">
    <interactant intactId="EBI-8481408">
        <id>Q969F8</id>
    </interactant>
    <interactant intactId="EBI-3909604">
        <id>P50148</id>
        <label>GNAQ</label>
    </interactant>
    <organismsDiffer>false</organismsDiffer>
    <experiments>2</experiments>
</comment>
<comment type="interaction">
    <interactant intactId="EBI-8481408">
        <id>Q969F8</id>
    </interactant>
    <interactant intactId="EBI-712311">
        <id>P67775</id>
        <label>PPP2CA</label>
    </interactant>
    <organismsDiffer>false</organismsDiffer>
    <experiments>3</experiments>
</comment>
<comment type="subcellular location">
    <subcellularLocation>
        <location>Cell membrane</location>
        <topology>Multi-pass membrane protein</topology>
    </subcellularLocation>
</comment>
<comment type="tissue specificity">
    <text evidence="4 5 6 7 8 11">Most highly expressed in the pancreas, placenta and spinal cord, with lower-level of expression in peripheral blood leukocytes, kidney, lung, fetal liver, stomach, small intestine, testes, spleen, thymus, adrenal glands and lymph nodes. In the adult brain, expressed in the superior frontal gyrus, putamen, caudate nucleus, cingulate gyrus, nucleus accumbens, hippocampus, pons and amygdala, as well as the hypothalamus and pituitary. Expression levels are higher in early (7-9 weeks) than term placentas. Expression levels were increased in both early placentas and molar pregnancies and were reduced in choriocarcinoma cells. Expressed at higher levels in first trimester trophoblasts than at term of gestation. Also found in the extravillous trophoblast suggesting endocrine/paracrine activation mechanism.</text>
</comment>
<comment type="induction">
    <text>Expressed at higher levels in first trimester trophoblasts than at term of gestation.</text>
</comment>
<comment type="disease" evidence="9 10 13 14 16 17">
    <disease id="DI-03568">
        <name>Hypogonadotropic hypogonadism 8 with or without anosmia</name>
        <acronym>HH8</acronym>
        <description>A disorder characterized by absent or incomplete sexual maturation by the age of 18 years, in conjunction with low levels of circulating gonadotropins and testosterone and no other abnormalities of the hypothalamic-pituitary axis. In some cases, it is associated with non-reproductive phenotypes, such as anosmia, cleft palate, and sensorineural hearing loss. Anosmia or hyposmia is related to the absence or hypoplasia of the olfactory bulbs and tracts. Hypogonadism is due to deficiency in gonadotropin-releasing hormone and probably results from a failure of embryonic migration of gonadotropin-releasing hormone-synthesizing neurons. In the presence of anosmia, idiopathic hypogonadotropic hypogonadism is referred to as Kallmann syndrome, whereas in the presence of a normal sense of smell, it has been termed normosmic idiopathic hypogonadotropic hypogonadism (nIHH).</description>
        <dbReference type="MIM" id="614837"/>
    </disease>
    <text evidence="16">The disease is caused by variants affecting distinct genetic loci, including the gene represented in this entry. The genetics of hypogonadotropic hypogonadism involves various modes of transmission. Oligogenic inheritance has been reported in some patients carrying mutations in KISS1R as well as in other HH-associated genes including FGFR1 and IL17RD (PubMed:23643382).</text>
</comment>
<comment type="disease" evidence="15">
    <disease id="DI-01332">
        <name>Precocious puberty, central 1</name>
        <acronym>CPPB1</acronym>
        <description>A condition defined as the development of secondary sexual characteristics in boys and girls at a chronological age that is 2.5 standard deviations below the mean age at onset of puberty in the population. Central precocious puberty results from premature activation of the hypothalamic-pituitary-gonadal axis.</description>
        <dbReference type="MIM" id="176400"/>
    </disease>
    <text>The disease is caused by variants affecting the gene represented in this entry.</text>
</comment>
<comment type="similarity">
    <text evidence="2">Belongs to the G-protein coupled receptor 1 family.</text>
</comment>
<comment type="online information" name="Protein Spotlight">
    <link uri="https://www.proteinspotlight.org/back_issues/058"/>
    <text>Tintin's blight - Issue 58 of May 2005</text>
</comment>
<protein>
    <recommendedName>
        <fullName>KiSS-1 receptor</fullName>
        <shortName>KiSS-1R</shortName>
    </recommendedName>
    <alternativeName>
        <fullName>G-protein coupled receptor 54</fullName>
    </alternativeName>
    <alternativeName>
        <fullName>G-protein coupled receptor OT7T175</fullName>
        <shortName>hOT7T175</shortName>
    </alternativeName>
    <alternativeName>
        <fullName>Hypogonadotropin-1</fullName>
    </alternativeName>
    <alternativeName>
        <fullName>Kisspeptins receptor</fullName>
    </alternativeName>
    <alternativeName>
        <fullName>Metastin receptor</fullName>
    </alternativeName>
</protein>
<evidence type="ECO:0000255" key="1"/>
<evidence type="ECO:0000255" key="2">
    <source>
        <dbReference type="PROSITE-ProRule" id="PRU00521"/>
    </source>
</evidence>
<evidence type="ECO:0000256" key="3">
    <source>
        <dbReference type="SAM" id="MobiDB-lite"/>
    </source>
</evidence>
<evidence type="ECO:0000269" key="4">
    <source>
    </source>
</evidence>
<evidence type="ECO:0000269" key="5">
    <source>
    </source>
</evidence>
<evidence type="ECO:0000269" key="6">
    <source>
    </source>
</evidence>
<evidence type="ECO:0000269" key="7">
    <source>
    </source>
</evidence>
<evidence type="ECO:0000269" key="8">
    <source>
    </source>
</evidence>
<evidence type="ECO:0000269" key="9">
    <source>
    </source>
</evidence>
<evidence type="ECO:0000269" key="10">
    <source>
    </source>
</evidence>
<evidence type="ECO:0000269" key="11">
    <source>
    </source>
</evidence>
<evidence type="ECO:0000269" key="12">
    <source>
    </source>
</evidence>
<evidence type="ECO:0000269" key="13">
    <source>
    </source>
</evidence>
<evidence type="ECO:0000269" key="14">
    <source>
    </source>
</evidence>
<evidence type="ECO:0000269" key="15">
    <source>
    </source>
</evidence>
<evidence type="ECO:0000269" key="16">
    <source>
    </source>
</evidence>
<evidence type="ECO:0000269" key="17">
    <source>
    </source>
</evidence>
<evidence type="ECO:0000269" key="18">
    <source ref="8"/>
</evidence>
<evidence type="ECO:0007829" key="19">
    <source>
        <dbReference type="PDB" id="8XGS"/>
    </source>
</evidence>
<evidence type="ECO:0007829" key="20">
    <source>
        <dbReference type="PDB" id="8ZJD"/>
    </source>
</evidence>
<gene>
    <name type="primary">KISS1R</name>
    <name type="synonym">AXOR12</name>
    <name type="synonym">GPR54</name>
</gene>
<reference key="1">
    <citation type="journal article" date="2001" name="Nature">
        <title>Metastasis suppressor gene KiSS-1 encodes peptide ligand of a G-protein-coupled receptor.</title>
        <authorList>
            <person name="Ohtaki T."/>
            <person name="Shintani Y."/>
            <person name="Honda S."/>
            <person name="Matsumoto H."/>
            <person name="Hori A."/>
            <person name="Kanehashi K."/>
            <person name="Terao Y."/>
            <person name="Kumano S."/>
            <person name="Takatsu Y."/>
            <person name="Masuda Y."/>
            <person name="Ishibashi Y."/>
            <person name="Watanabe T."/>
            <person name="Asada M."/>
            <person name="Yamada T."/>
            <person name="Suenaga M."/>
            <person name="Kitada C."/>
            <person name="Usuki S."/>
            <person name="Kurokawa T."/>
            <person name="Onda H."/>
            <person name="Nishimura O."/>
            <person name="Fujino M."/>
        </authorList>
    </citation>
    <scope>NUCLEOTIDE SEQUENCE [MRNA]</scope>
    <scope>VARIANT HIS-364</scope>
    <scope>TISSUE SPECIFICITY</scope>
</reference>
<reference key="2">
    <citation type="journal article" date="2001" name="Biochem. Biophys. Res. Commun.">
        <title>FMRFamide-related neuropeptides are agonists of the orphan G-protein-coupled receptor GPR54.</title>
        <authorList>
            <person name="Clements M.K."/>
            <person name="McDonald T.P."/>
            <person name="Wang R."/>
            <person name="Xie G."/>
            <person name="O'Dowd B.F."/>
            <person name="George S.R."/>
            <person name="Austin C.P."/>
            <person name="Liu Q."/>
        </authorList>
    </citation>
    <scope>NUCLEOTIDE SEQUENCE [MRNA]</scope>
    <scope>VARIANT HIS-364</scope>
    <scope>TISSUE SPECIFICITY</scope>
</reference>
<reference key="3">
    <citation type="journal article" date="2001" name="J. Biol. Chem.">
        <title>AXOR12, a novel human G protein-coupled receptor, activated by the peptide KiSS-1.</title>
        <authorList>
            <person name="Muir A.I."/>
            <person name="Chamberlain L."/>
            <person name="Elshourbagy N.A."/>
            <person name="Michalovich D."/>
            <person name="Moore D.J."/>
            <person name="Calamari A."/>
            <person name="Szekeres P.G."/>
            <person name="Sarau H.M."/>
            <person name="Chambers J.K."/>
            <person name="Murdock P."/>
            <person name="Steplewski K."/>
            <person name="Shabon U."/>
            <person name="Miller J.E."/>
            <person name="Middleton S.E."/>
            <person name="Darker J.G."/>
            <person name="Larminie C.G.C."/>
            <person name="Wilson S."/>
            <person name="Bergsma D.J."/>
            <person name="Emson P."/>
            <person name="Faull R."/>
            <person name="Philpott K.L."/>
            <person name="Harrison D.C."/>
        </authorList>
    </citation>
    <scope>NUCLEOTIDE SEQUENCE [MRNA]</scope>
    <scope>TISSUE SPECIFICITY</scope>
    <source>
        <tissue>Brain</tissue>
    </source>
</reference>
<reference key="4">
    <citation type="journal article" date="2001" name="J. Biol. Chem.">
        <title>The metastasis suppressor gene KiSS-1 encodes kisspeptins, the natural ligands of the orphan G protein-coupled receptor GPR54.</title>
        <authorList>
            <person name="Kotani M."/>
            <person name="Detheux M."/>
            <person name="Vandenbogaerde A."/>
            <person name="Communi D."/>
            <person name="Vanderwinden J.-M."/>
            <person name="Le Poul E."/>
            <person name="Brezillon S."/>
            <person name="Tyldesley R."/>
            <person name="Suarez-Huerta N."/>
            <person name="Vandeput F."/>
            <person name="Blanpain C."/>
            <person name="Schiffmann S.N."/>
            <person name="Vassart G."/>
            <person name="Parmentier M."/>
        </authorList>
    </citation>
    <scope>NUCLEOTIDE SEQUENCE [MRNA]</scope>
    <scope>VARIANT HIS-364</scope>
    <scope>POSSIBLE FUNCTION</scope>
    <scope>TISSUE SPECIFICITY</scope>
    <source>
        <tissue>Hypothalamus</tissue>
    </source>
</reference>
<reference key="5">
    <citation type="journal article" date="2003" name="N. Engl. J. Med.">
        <title>The GPR54 gene as a regulator of puberty.</title>
        <authorList>
            <person name="Seminara S.B."/>
            <person name="Messager S."/>
            <person name="Chatzidaki E.E."/>
            <person name="Thresher R.R."/>
            <person name="Acierno J.S. Jr."/>
            <person name="Shagoury J.K."/>
            <person name="Bo-Abbas Y."/>
            <person name="Kuohung W."/>
            <person name="Schwinof K.M."/>
            <person name="Hendrick A.G."/>
            <person name="Zahn D."/>
            <person name="Dixon J."/>
            <person name="Kaiser U.B."/>
            <person name="Slaugenhaupt S.A."/>
            <person name="Gusella J.F."/>
            <person name="O'Rahilly S."/>
            <person name="Carlton M.B.L."/>
            <person name="Crowley W.F. Jr."/>
            <person name="Aparicio S.A.J.R."/>
            <person name="Colledge W.H."/>
        </authorList>
    </citation>
    <scope>NUCLEOTIDE SEQUENCE [MRNA]</scope>
    <scope>VARIANT HH8 SER-148</scope>
    <scope>VARIANT HIS-364</scope>
</reference>
<reference key="6">
    <citation type="submission" date="2008-07" db="EMBL/GenBank/DDBJ databases">
        <title>Isolation of cDNA coding for human KISS1 receptor (KISS1R).</title>
        <authorList>
            <person name="Kaighin V.A."/>
            <person name="Martin A.L."/>
            <person name="Aronstam R.S."/>
        </authorList>
    </citation>
    <scope>NUCLEOTIDE SEQUENCE [MRNA]</scope>
    <source>
        <tissue>Kidney</tissue>
    </source>
</reference>
<reference key="7">
    <citation type="journal article" date="2004" name="Nature">
        <title>The DNA sequence and biology of human chromosome 19.</title>
        <authorList>
            <person name="Grimwood J."/>
            <person name="Gordon L.A."/>
            <person name="Olsen A.S."/>
            <person name="Terry A."/>
            <person name="Schmutz J."/>
            <person name="Lamerdin J.E."/>
            <person name="Hellsten U."/>
            <person name="Goodstein D."/>
            <person name="Couronne O."/>
            <person name="Tran-Gyamfi M."/>
            <person name="Aerts A."/>
            <person name="Altherr M."/>
            <person name="Ashworth L."/>
            <person name="Bajorek E."/>
            <person name="Black S."/>
            <person name="Branscomb E."/>
            <person name="Caenepeel S."/>
            <person name="Carrano A.V."/>
            <person name="Caoile C."/>
            <person name="Chan Y.M."/>
            <person name="Christensen M."/>
            <person name="Cleland C.A."/>
            <person name="Copeland A."/>
            <person name="Dalin E."/>
            <person name="Dehal P."/>
            <person name="Denys M."/>
            <person name="Detter J.C."/>
            <person name="Escobar J."/>
            <person name="Flowers D."/>
            <person name="Fotopulos D."/>
            <person name="Garcia C."/>
            <person name="Georgescu A.M."/>
            <person name="Glavina T."/>
            <person name="Gomez M."/>
            <person name="Gonzales E."/>
            <person name="Groza M."/>
            <person name="Hammon N."/>
            <person name="Hawkins T."/>
            <person name="Haydu L."/>
            <person name="Ho I."/>
            <person name="Huang W."/>
            <person name="Israni S."/>
            <person name="Jett J."/>
            <person name="Kadner K."/>
            <person name="Kimball H."/>
            <person name="Kobayashi A."/>
            <person name="Larionov V."/>
            <person name="Leem S.-H."/>
            <person name="Lopez F."/>
            <person name="Lou Y."/>
            <person name="Lowry S."/>
            <person name="Malfatti S."/>
            <person name="Martinez D."/>
            <person name="McCready P.M."/>
            <person name="Medina C."/>
            <person name="Morgan J."/>
            <person name="Nelson K."/>
            <person name="Nolan M."/>
            <person name="Ovcharenko I."/>
            <person name="Pitluck S."/>
            <person name="Pollard M."/>
            <person name="Popkie A.P."/>
            <person name="Predki P."/>
            <person name="Quan G."/>
            <person name="Ramirez L."/>
            <person name="Rash S."/>
            <person name="Retterer J."/>
            <person name="Rodriguez A."/>
            <person name="Rogers S."/>
            <person name="Salamov A."/>
            <person name="Salazar A."/>
            <person name="She X."/>
            <person name="Smith D."/>
            <person name="Slezak T."/>
            <person name="Solovyev V."/>
            <person name="Thayer N."/>
            <person name="Tice H."/>
            <person name="Tsai M."/>
            <person name="Ustaszewska A."/>
            <person name="Vo N."/>
            <person name="Wagner M."/>
            <person name="Wheeler J."/>
            <person name="Wu K."/>
            <person name="Xie G."/>
            <person name="Yang J."/>
            <person name="Dubchak I."/>
            <person name="Furey T.S."/>
            <person name="DeJong P."/>
            <person name="Dickson M."/>
            <person name="Gordon D."/>
            <person name="Eichler E.E."/>
            <person name="Pennacchio L.A."/>
            <person name="Richardson P."/>
            <person name="Stubbs L."/>
            <person name="Rokhsar D.S."/>
            <person name="Myers R.M."/>
            <person name="Rubin E.M."/>
            <person name="Lucas S.M."/>
        </authorList>
    </citation>
    <scope>NUCLEOTIDE SEQUENCE [LARGE SCALE GENOMIC DNA]</scope>
</reference>
<reference key="8">
    <citation type="submission" date="2005-09" db="EMBL/GenBank/DDBJ databases">
        <authorList>
            <person name="Mural R.J."/>
            <person name="Istrail S."/>
            <person name="Sutton G.G."/>
            <person name="Florea L."/>
            <person name="Halpern A.L."/>
            <person name="Mobarry C.M."/>
            <person name="Lippert R."/>
            <person name="Walenz B."/>
            <person name="Shatkay H."/>
            <person name="Dew I."/>
            <person name="Miller J.R."/>
            <person name="Flanigan M.J."/>
            <person name="Edwards N.J."/>
            <person name="Bolanos R."/>
            <person name="Fasulo D."/>
            <person name="Halldorsson B.V."/>
            <person name="Hannenhalli S."/>
            <person name="Turner R."/>
            <person name="Yooseph S."/>
            <person name="Lu F."/>
            <person name="Nusskern D.R."/>
            <person name="Shue B.C."/>
            <person name="Zheng X.H."/>
            <person name="Zhong F."/>
            <person name="Delcher A.L."/>
            <person name="Huson D.H."/>
            <person name="Kravitz S.A."/>
            <person name="Mouchard L."/>
            <person name="Reinert K."/>
            <person name="Remington K.A."/>
            <person name="Clark A.G."/>
            <person name="Waterman M.S."/>
            <person name="Eichler E.E."/>
            <person name="Adams M.D."/>
            <person name="Hunkapiller M.W."/>
            <person name="Myers E.W."/>
            <person name="Venter J.C."/>
        </authorList>
    </citation>
    <scope>NUCLEOTIDE SEQUENCE [LARGE SCALE GENOMIC DNA]</scope>
    <scope>VARIANT HIS-364</scope>
</reference>
<reference key="9">
    <citation type="journal article" date="2004" name="Genome Res.">
        <title>The status, quality, and expansion of the NIH full-length cDNA project: the Mammalian Gene Collection (MGC).</title>
        <authorList>
            <consortium name="The MGC Project Team"/>
        </authorList>
    </citation>
    <scope>NUCLEOTIDE SEQUENCE [LARGE SCALE MRNA]</scope>
    <scope>VARIANT HIS-364</scope>
</reference>
<reference key="10">
    <citation type="journal article" date="2004" name="Trends Endocrinol. Metab.">
        <title>GPR54 and puberty.</title>
        <authorList>
            <person name="Colledge W.H."/>
        </authorList>
    </citation>
    <scope>REVIEW</scope>
</reference>
<reference key="11">
    <citation type="journal article" date="2001" name="Biochem. Biophys. Res. Commun.">
        <title>Metastin suppresses the motility and growth of CHO cells transfected with its receptor.</title>
        <authorList>
            <person name="Hori A."/>
            <person name="Honda S."/>
            <person name="Asada M."/>
            <person name="Ohtaki T."/>
            <person name="Oda K."/>
            <person name="Watanabe T."/>
            <person name="Shintani Y."/>
            <person name="Yamada T."/>
            <person name="Suenaga M."/>
            <person name="Kitada C."/>
            <person name="Onda H."/>
            <person name="Kurokawa T."/>
            <person name="Nishimura O."/>
            <person name="Fujino M."/>
        </authorList>
    </citation>
    <scope>INVOLVEMENT IN CELL MOBILITY AND GROWTH INHIBITION</scope>
</reference>
<reference key="12">
    <citation type="journal article" date="2002" name="J. Clin. Endocrinol. Metab.">
        <title>Transcriptional expression of genes involved in cell invasion and migration by normal and tumoral trophoblast cells.</title>
        <authorList>
            <person name="Janneau J.-L."/>
            <person name="Maldonado-Estrada J."/>
            <person name="Tachdjian G."/>
            <person name="Miran I."/>
            <person name="Motte N."/>
            <person name="Saulnier P."/>
            <person name="Sabourin J.-C."/>
            <person name="Cote J.-F."/>
            <person name="Simon B."/>
            <person name="Frydman R."/>
            <person name="Chaouat G."/>
            <person name="Bellet D."/>
        </authorList>
    </citation>
    <scope>TISSUE SPECIFICITY</scope>
    <scope>POSSIBLE INVOLVEMENT IN INVASION/MIGRATION OF TROPHOBLAST CELLS</scope>
</reference>
<reference key="13">
    <citation type="journal article" date="2002" name="J. Clin. Endocrinol. Metab.">
        <title>Metastin receptor is overexpressed in papillary thyroid cancer and activates MAP kinase in thyroid cancer cells.</title>
        <authorList>
            <person name="Ringel M.D."/>
            <person name="Hardy E."/>
            <person name="Bernet V.J."/>
            <person name="Burch H.B."/>
            <person name="Schuppert F."/>
            <person name="Burman K.D."/>
            <person name="Saji M."/>
        </authorList>
    </citation>
    <scope>INVOLVEMENT IN THYROID CANCER</scope>
</reference>
<reference key="14">
    <citation type="journal article" date="2003" name="Proc. Natl. Acad. Sci. U.S.A.">
        <title>Hypogonadotropic hypogonadism due to loss of function of the KiSS1-derived peptide receptor GPR54.</title>
        <authorList>
            <person name="de Roux N."/>
            <person name="Genin E."/>
            <person name="Carel J.-C."/>
            <person name="Matsuda F."/>
            <person name="Chaussain J.-L."/>
            <person name="Milgrom E."/>
        </authorList>
    </citation>
    <scope>INVOLVEMENT IN HH8</scope>
</reference>
<reference key="15">
    <citation type="journal article" date="2003" name="J. Cancer Res. Clin. Oncol.">
        <title>Quantitative reverse transcriptase polymerase chain reaction analysis for KiSS-1 and orphan G-protein-coupled receptor (hOT7T175) gene expression in hepatocellular carcinoma.</title>
        <authorList>
            <person name="Ikeguchi M."/>
            <person name="Hirooka Y."/>
            <person name="Kaibara N."/>
        </authorList>
    </citation>
    <scope>POSSIBLE INVOLVEMENT IN HEPATOCELLULAR CARCINOMA</scope>
</reference>
<reference key="16">
    <citation type="journal article" date="2004" name="Clin. Cancer Res.">
        <title>Clinical significance of the loss of KiSS-1 and orphan G-protein-coupled receptor (hOT7T175) gene expression in esophageal squamous cell carcinoma.</title>
        <authorList>
            <person name="Ikeguchi M."/>
            <person name="Yamaguchi K."/>
            <person name="Kaibara N."/>
        </authorList>
    </citation>
    <scope>POSSIBLE INVOLVEMENT IN ESOPHAGEAL SQUAMOUS CELL CARCINOMA</scope>
</reference>
<reference key="17">
    <citation type="journal article" date="2004" name="J. Cell Sci.">
        <title>Kisspeptin-10, a KiSS-1/metastin-derived decapeptide, is a physiological invasion inhibitor of primary human trophoblasts.</title>
        <authorList>
            <person name="Bilban M."/>
            <person name="Ghaffari-Tabrizi N."/>
            <person name="Hintermann E."/>
            <person name="Bauer S."/>
            <person name="Molzer S."/>
            <person name="Zoratti C."/>
            <person name="Malli R."/>
            <person name="Sharabi A."/>
            <person name="Hiden U."/>
            <person name="Graier W."/>
            <person name="Knoefler M."/>
            <person name="Andreae F."/>
            <person name="Wagner O."/>
            <person name="Quaranta V."/>
            <person name="Desoye G."/>
        </authorList>
    </citation>
    <scope>TISSUE SPECIFICITY</scope>
    <scope>ROLE IN THROPHOBLAST MIGRATION AND INVASION</scope>
</reference>
<reference key="18">
    <citation type="journal article" date="2005" name="Biochem. Biophys. Res. Commun.">
        <title>Activation of GPR54 promotes cell cycle arrest and apoptosis of human tumor cells through a specific transcriptional program not shared by other G(q)-coupled receptors.</title>
        <authorList>
            <person name="Becker J.A.J."/>
            <person name="Mirjolet J.-F."/>
            <person name="Bernard J."/>
            <person name="Burgeon E."/>
            <person name="Simons M.-J."/>
            <person name="Vassart G."/>
            <person name="Parmentier M."/>
            <person name="Libert F."/>
        </authorList>
    </citation>
    <scope>CHARACTERIZATION OF METASTASIS SUPPRESSOR PROPERTIES</scope>
</reference>
<reference key="19">
    <citation type="journal article" date="2005" name="J. Clin. Endocrinol. Metab.">
        <title>Two novel missense mutations in G protein-coupled receptor 54 in a patient with hypogonadotropic hypogonadism.</title>
        <authorList>
            <person name="Semple R.K."/>
            <person name="Achermann J.C."/>
            <person name="Ellery J."/>
            <person name="Farooqi I.S."/>
            <person name="Karet F.E."/>
            <person name="Stanhope R.G."/>
            <person name="O'rahilly S."/>
            <person name="Aparicio S.A."/>
        </authorList>
    </citation>
    <scope>VARIANTS HH8 ARG-223 AND LEU-297</scope>
    <scope>VARIANT HIS-364</scope>
    <scope>CHARACTERIZATION OF VARIANTS HH8 ARG-223 AND LEU-297</scope>
</reference>
<reference key="20">
    <citation type="journal article" date="2007" name="J. Clin. Endocrinol. Metab.">
        <title>Neuroendocrine phenotype analysis in five patients with isolated hypogonadotropic hypogonadism due to a L102P inactivating mutation of GPR54.</title>
        <authorList>
            <person name="Tenenbaum-Rakover Y."/>
            <person name="Commenges-Ducos M."/>
            <person name="Iovane A."/>
            <person name="Aumas C."/>
            <person name="Admoni O."/>
            <person name="de Roux N."/>
        </authorList>
    </citation>
    <scope>VARIANT HH8 PRO-102</scope>
</reference>
<reference key="21">
    <citation type="journal article" date="2008" name="N. Engl. J. Med.">
        <title>A GPR54-activating mutation in a patient with central precocious puberty.</title>
        <authorList>
            <person name="Teles M.G."/>
            <person name="Bianco S.D.C."/>
            <person name="Brito V.N."/>
            <person name="Trarbach E.B."/>
            <person name="Kuohung W."/>
            <person name="Xu S."/>
            <person name="Seminara S.B."/>
            <person name="Mendonca B.B."/>
            <person name="Kaiser U.B."/>
            <person name="Latronico A.C."/>
        </authorList>
    </citation>
    <scope>VARIANT CPPB1 PRO-386</scope>
    <scope>CHARACTERIZATION OF VARIANT CPPB1 PRO-386</scope>
</reference>
<reference key="22">
    <citation type="journal article" date="2013" name="Am. J. Hum. Genet.">
        <title>Mutations in FGF17, IL17RD, DUSP6, SPRY4, and FLRT3 are identified in individuals with congenital hypogonadotropic hypogonadism.</title>
        <authorList>
            <person name="Miraoui H."/>
            <person name="Dwyer A.A."/>
            <person name="Sykiotis G.P."/>
            <person name="Plummer L."/>
            <person name="Chung W."/>
            <person name="Feng B."/>
            <person name="Beenken A."/>
            <person name="Clarke J."/>
            <person name="Pers T.H."/>
            <person name="Dworzynski P."/>
            <person name="Keefe K."/>
            <person name="Niedziela M."/>
            <person name="Raivio T."/>
            <person name="Crowley W.F. Jr."/>
            <person name="Seminara S.B."/>
            <person name="Quinton R."/>
            <person name="Hughes V.A."/>
            <person name="Kumanov P."/>
            <person name="Young J."/>
            <person name="Yialamas M.A."/>
            <person name="Hall J.E."/>
            <person name="Van Vliet G."/>
            <person name="Chanoine J.P."/>
            <person name="Rubenstein J."/>
            <person name="Mohammadi M."/>
            <person name="Tsai P.S."/>
            <person name="Sidis Y."/>
            <person name="Lage K."/>
            <person name="Pitteloud N."/>
        </authorList>
    </citation>
    <scope>VARIANTS HH8 THR-189 AND ASP-194</scope>
</reference>
<reference key="23">
    <citation type="journal article" date="2014" name="J. Clin. Endocrinol. Metab.">
        <title>The prevalence of CHD7 missense versus truncating mutations is higher in patients with Kallmann syndrome than in typical CHARGE patients.</title>
        <authorList>
            <person name="Marcos S."/>
            <person name="Sarfati J."/>
            <person name="Leroy C."/>
            <person name="Fouveaut C."/>
            <person name="Parent P."/>
            <person name="Metz C."/>
            <person name="Wolczynski S."/>
            <person name="Gerard M."/>
            <person name="Bieth E."/>
            <person name="Kurtz F."/>
            <person name="Verier-Mine O."/>
            <person name="Perrin L."/>
            <person name="Archambeaud F."/>
            <person name="Cabrol S."/>
            <person name="Rodien P."/>
            <person name="Hove H."/>
            <person name="Prescott T."/>
            <person name="Lacombe D."/>
            <person name="Christin-Maitre S."/>
            <person name="Touraine P."/>
            <person name="Hieronimus S."/>
            <person name="Dewailly D."/>
            <person name="Young J."/>
            <person name="Pugeat M."/>
            <person name="Hardelin J.P."/>
            <person name="Dode C."/>
        </authorList>
    </citation>
    <scope>VARIANT HH8 LEU-262</scope>
</reference>
<accession>Q969F8</accession>
<accession>A5D8U2</accession>
<accession>B2RTV1</accession>
<accession>Q96QG0</accession>
<feature type="chain" id="PRO_0000069695" description="KiSS-1 receptor">
    <location>
        <begin position="1"/>
        <end position="398"/>
    </location>
</feature>
<feature type="topological domain" description="Extracellular" evidence="1">
    <location>
        <begin position="1"/>
        <end position="46"/>
    </location>
</feature>
<feature type="transmembrane region" description="Helical; Name=1" evidence="1">
    <location>
        <begin position="47"/>
        <end position="67"/>
    </location>
</feature>
<feature type="topological domain" description="Cytoplasmic" evidence="1">
    <location>
        <begin position="68"/>
        <end position="78"/>
    </location>
</feature>
<feature type="transmembrane region" description="Helical; Name=2" evidence="1">
    <location>
        <begin position="79"/>
        <end position="101"/>
    </location>
</feature>
<feature type="topological domain" description="Extracellular" evidence="1">
    <location>
        <begin position="102"/>
        <end position="120"/>
    </location>
</feature>
<feature type="transmembrane region" description="Helical; Name=3" evidence="1">
    <location>
        <begin position="121"/>
        <end position="138"/>
    </location>
</feature>
<feature type="topological domain" description="Cytoplasmic" evidence="1">
    <location>
        <begin position="139"/>
        <end position="157"/>
    </location>
</feature>
<feature type="transmembrane region" description="Helical; Name=4" evidence="1">
    <location>
        <begin position="158"/>
        <end position="178"/>
    </location>
</feature>
<feature type="topological domain" description="Extracellular" evidence="1">
    <location>
        <begin position="179"/>
        <end position="202"/>
    </location>
</feature>
<feature type="transmembrane region" description="Helical; Name=5" evidence="1">
    <location>
        <begin position="203"/>
        <end position="223"/>
    </location>
</feature>
<feature type="topological domain" description="Cytoplasmic" evidence="1">
    <location>
        <begin position="224"/>
        <end position="263"/>
    </location>
</feature>
<feature type="transmembrane region" description="Helical; Name=6" evidence="1">
    <location>
        <begin position="264"/>
        <end position="284"/>
    </location>
</feature>
<feature type="topological domain" description="Extracellular" evidence="1">
    <location>
        <begin position="285"/>
        <end position="305"/>
    </location>
</feature>
<feature type="transmembrane region" description="Helical; Name=7" evidence="1">
    <location>
        <begin position="306"/>
        <end position="328"/>
    </location>
</feature>
<feature type="topological domain" description="Cytoplasmic" evidence="1">
    <location>
        <begin position="329"/>
        <end position="398"/>
    </location>
</feature>
<feature type="region of interest" description="Disordered" evidence="3">
    <location>
        <begin position="341"/>
        <end position="363"/>
    </location>
</feature>
<feature type="glycosylation site" description="N-linked (GlcNAc...) asparagine" evidence="1">
    <location>
        <position position="10"/>
    </location>
</feature>
<feature type="glycosylation site" description="N-linked (GlcNAc...) asparagine" evidence="1">
    <location>
        <position position="18"/>
    </location>
</feature>
<feature type="glycosylation site" description="N-linked (GlcNAc...) asparagine" evidence="1">
    <location>
        <position position="28"/>
    </location>
</feature>
<feature type="disulfide bond" evidence="2">
    <location>
        <begin position="115"/>
        <end position="191"/>
    </location>
</feature>
<feature type="sequence variant" id="VAR_043906" description="In HH8; absence of inositol phosphate accumulation under kisspeptin challenge; normal affinity for kisspeptin; dbSNP:rs104894703." evidence="14">
    <original>L</original>
    <variation>P</variation>
    <location>
        <position position="102"/>
    </location>
</feature>
<feature type="sequence variant" id="VAR_021392" description="In HH8; 65% reduction of inositol phosphate production; dbSNP:rs28939719." evidence="10">
    <original>L</original>
    <variation>S</variation>
    <location>
        <position position="148"/>
    </location>
</feature>
<feature type="sequence variant" id="VAR_069961" description="In HH8; benign; the patient also carries a mutation in FGFR1; phenotype consistent with normosmic idiopathic hypogonadotropic hypogonadism; dbSNP:rs73507527." evidence="16">
    <original>A</original>
    <variation>T</variation>
    <location>
        <position position="189"/>
    </location>
</feature>
<feature type="sequence variant" id="VAR_069962" description="In HH8; phenotype consistent with Kallmann syndrome; the patient also carries a mutation in IL17RD; dbSNP:rs397514699." evidence="16">
    <original>A</original>
    <variation>D</variation>
    <location>
        <position position="194"/>
    </location>
</feature>
<feature type="sequence variant" id="VAR_021393" description="In HH8; exhibit profoundly impaired signaling; dbSNP:rs2037102475." evidence="13">
    <original>C</original>
    <variation>R</variation>
    <location>
        <position position="223"/>
    </location>
</feature>
<feature type="sequence variant" id="VAR_072975" description="In HH8; dbSNP:rs745580229." evidence="17">
    <original>S</original>
    <variation>L</variation>
    <location>
        <position position="262"/>
    </location>
</feature>
<feature type="sequence variant" id="VAR_021394" description="In HH8; mild reduction in ligand-stimulated activity across the ligand dose range; dbSNP:rs144670595." evidence="13">
    <original>R</original>
    <variation>L</variation>
    <location>
        <position position="297"/>
    </location>
</feature>
<feature type="sequence variant" id="VAR_021395" description="In dbSNP:rs350132." evidence="4 6 7 10 12 13 18">
    <original>L</original>
    <variation>H</variation>
    <location>
        <position position="364"/>
    </location>
</feature>
<feature type="sequence variant" id="VAR_043907" description="In CPPB1; reduced rate of decline in inositol phosphate accumulation after kisspeptin stimulation; prolonged phosphorylation of ERK; dbSNP:rs121908499." evidence="15">
    <original>R</original>
    <variation>P</variation>
    <location>
        <position position="386"/>
    </location>
</feature>
<feature type="helix" evidence="19">
    <location>
        <begin position="41"/>
        <end position="69"/>
    </location>
</feature>
<feature type="strand" evidence="19">
    <location>
        <begin position="71"/>
        <end position="73"/>
    </location>
</feature>
<feature type="helix" evidence="19">
    <location>
        <begin position="76"/>
        <end position="82"/>
    </location>
</feature>
<feature type="turn" evidence="19">
    <location>
        <begin position="83"/>
        <end position="85"/>
    </location>
</feature>
<feature type="helix" evidence="19">
    <location>
        <begin position="86"/>
        <end position="101"/>
    </location>
</feature>
<feature type="turn" evidence="19">
    <location>
        <begin position="102"/>
        <end position="104"/>
    </location>
</feature>
<feature type="helix" evidence="19">
    <location>
        <begin position="112"/>
        <end position="145"/>
    </location>
</feature>
<feature type="turn" evidence="19">
    <location>
        <begin position="147"/>
        <end position="152"/>
    </location>
</feature>
<feature type="helix" evidence="19">
    <location>
        <begin position="156"/>
        <end position="174"/>
    </location>
</feature>
<feature type="helix" evidence="19">
    <location>
        <begin position="175"/>
        <end position="179"/>
    </location>
</feature>
<feature type="strand" evidence="20">
    <location>
        <begin position="181"/>
        <end position="184"/>
    </location>
</feature>
<feature type="turn" evidence="19">
    <location>
        <begin position="186"/>
        <end position="189"/>
    </location>
</feature>
<feature type="strand" evidence="20">
    <location>
        <begin position="190"/>
        <end position="193"/>
    </location>
</feature>
<feature type="helix" evidence="19">
    <location>
        <begin position="198"/>
        <end position="212"/>
    </location>
</feature>
<feature type="helix" evidence="19">
    <location>
        <begin position="214"/>
        <end position="222"/>
    </location>
</feature>
<feature type="turn" evidence="19">
    <location>
        <begin position="223"/>
        <end position="225"/>
    </location>
</feature>
<feature type="helix" evidence="19">
    <location>
        <begin position="226"/>
        <end position="235"/>
    </location>
</feature>
<feature type="helix" evidence="19">
    <location>
        <begin position="246"/>
        <end position="286"/>
    </location>
</feature>
<feature type="turn" evidence="19">
    <location>
        <begin position="291"/>
        <end position="293"/>
    </location>
</feature>
<feature type="helix" evidence="19">
    <location>
        <begin position="299"/>
        <end position="324"/>
    </location>
</feature>
<feature type="helix" evidence="19">
    <location>
        <begin position="328"/>
        <end position="335"/>
    </location>
</feature>